<evidence type="ECO:0000250" key="1"/>
<evidence type="ECO:0000255" key="2">
    <source>
        <dbReference type="HAMAP-Rule" id="MF_01109"/>
    </source>
</evidence>
<keyword id="KW-0028">Amino-acid biosynthesis</keyword>
<keyword id="KW-0055">Arginine biosynthesis</keyword>
<keyword id="KW-0963">Cytoplasm</keyword>
<keyword id="KW-1185">Reference proteome</keyword>
<keyword id="KW-0808">Transferase</keyword>
<gene>
    <name evidence="2" type="primary">argF</name>
    <name type="ordered locus">BP3538</name>
</gene>
<sequence length="313" mass="35134">MTPPTTQNGPLRHFLQFKDFSPAEIAYVLERTRIIKDKFKRYEPHMPLHDRTLAMVFEKASTRTRVSFEAGMYQMGGSVINLTSNDSQLGRSEPIEDTARVISRMVDIVMIRTFEQTRIERFASHSRVPVINGLTNEYHPCQILADIFTYIEHRGPIAGKTVAWIGDANNMSYTWLQAAEMLGFTLHVSTPAGYELDPARIGAPAAGVLKQFKDPMQACQGAHLVTTDVWTSMGYEAENEERRAAFADWCVDAEMMAAADPQAVFMHCLPAHRGEEVTGEVIDGAQSVVWDEAENRLHVQKALMEFLLLGQLA</sequence>
<protein>
    <recommendedName>
        <fullName evidence="2">Ornithine carbamoyltransferase</fullName>
        <shortName evidence="2">OTCase</shortName>
        <ecNumber evidence="2">2.1.3.3</ecNumber>
    </recommendedName>
</protein>
<feature type="chain" id="PRO_0000112893" description="Ornithine carbamoyltransferase">
    <location>
        <begin position="1"/>
        <end position="313"/>
    </location>
</feature>
<feature type="binding site" evidence="2">
    <location>
        <begin position="61"/>
        <end position="64"/>
    </location>
    <ligand>
        <name>carbamoyl phosphate</name>
        <dbReference type="ChEBI" id="CHEBI:58228"/>
    </ligand>
</feature>
<feature type="binding site" evidence="2">
    <location>
        <position position="88"/>
    </location>
    <ligand>
        <name>carbamoyl phosphate</name>
        <dbReference type="ChEBI" id="CHEBI:58228"/>
    </ligand>
</feature>
<feature type="binding site" evidence="2">
    <location>
        <position position="112"/>
    </location>
    <ligand>
        <name>carbamoyl phosphate</name>
        <dbReference type="ChEBI" id="CHEBI:58228"/>
    </ligand>
</feature>
<feature type="binding site" evidence="2">
    <location>
        <begin position="139"/>
        <end position="142"/>
    </location>
    <ligand>
        <name>carbamoyl phosphate</name>
        <dbReference type="ChEBI" id="CHEBI:58228"/>
    </ligand>
</feature>
<feature type="binding site" evidence="2">
    <location>
        <position position="170"/>
    </location>
    <ligand>
        <name>L-ornithine</name>
        <dbReference type="ChEBI" id="CHEBI:46911"/>
    </ligand>
</feature>
<feature type="binding site" evidence="2">
    <location>
        <position position="228"/>
    </location>
    <ligand>
        <name>L-ornithine</name>
        <dbReference type="ChEBI" id="CHEBI:46911"/>
    </ligand>
</feature>
<feature type="binding site" evidence="2">
    <location>
        <begin position="232"/>
        <end position="233"/>
    </location>
    <ligand>
        <name>L-ornithine</name>
        <dbReference type="ChEBI" id="CHEBI:46911"/>
    </ligand>
</feature>
<feature type="binding site" evidence="2">
    <location>
        <begin position="268"/>
        <end position="269"/>
    </location>
    <ligand>
        <name>carbamoyl phosphate</name>
        <dbReference type="ChEBI" id="CHEBI:58228"/>
    </ligand>
</feature>
<feature type="binding site" evidence="2">
    <location>
        <position position="296"/>
    </location>
    <ligand>
        <name>carbamoyl phosphate</name>
        <dbReference type="ChEBI" id="CHEBI:58228"/>
    </ligand>
</feature>
<proteinExistence type="inferred from homology"/>
<reference key="1">
    <citation type="journal article" date="2003" name="Nat. Genet.">
        <title>Comparative analysis of the genome sequences of Bordetella pertussis, Bordetella parapertussis and Bordetella bronchiseptica.</title>
        <authorList>
            <person name="Parkhill J."/>
            <person name="Sebaihia M."/>
            <person name="Preston A."/>
            <person name="Murphy L.D."/>
            <person name="Thomson N.R."/>
            <person name="Harris D.E."/>
            <person name="Holden M.T.G."/>
            <person name="Churcher C.M."/>
            <person name="Bentley S.D."/>
            <person name="Mungall K.L."/>
            <person name="Cerdeno-Tarraga A.-M."/>
            <person name="Temple L."/>
            <person name="James K.D."/>
            <person name="Harris B."/>
            <person name="Quail M.A."/>
            <person name="Achtman M."/>
            <person name="Atkin R."/>
            <person name="Baker S."/>
            <person name="Basham D."/>
            <person name="Bason N."/>
            <person name="Cherevach I."/>
            <person name="Chillingworth T."/>
            <person name="Collins M."/>
            <person name="Cronin A."/>
            <person name="Davis P."/>
            <person name="Doggett J."/>
            <person name="Feltwell T."/>
            <person name="Goble A."/>
            <person name="Hamlin N."/>
            <person name="Hauser H."/>
            <person name="Holroyd S."/>
            <person name="Jagels K."/>
            <person name="Leather S."/>
            <person name="Moule S."/>
            <person name="Norberczak H."/>
            <person name="O'Neil S."/>
            <person name="Ormond D."/>
            <person name="Price C."/>
            <person name="Rabbinowitsch E."/>
            <person name="Rutter S."/>
            <person name="Sanders M."/>
            <person name="Saunders D."/>
            <person name="Seeger K."/>
            <person name="Sharp S."/>
            <person name="Simmonds M."/>
            <person name="Skelton J."/>
            <person name="Squares R."/>
            <person name="Squares S."/>
            <person name="Stevens K."/>
            <person name="Unwin L."/>
            <person name="Whitehead S."/>
            <person name="Barrell B.G."/>
            <person name="Maskell D.J."/>
        </authorList>
    </citation>
    <scope>NUCLEOTIDE SEQUENCE [LARGE SCALE GENOMIC DNA]</scope>
    <source>
        <strain>Tohama I / ATCC BAA-589 / NCTC 13251</strain>
    </source>
</reference>
<comment type="function">
    <text evidence="1">Reversibly catalyzes the transfer of the carbamoyl group from carbamoyl phosphate (CP) to the N(epsilon) atom of ornithine (ORN) to produce L-citrulline.</text>
</comment>
<comment type="catalytic activity">
    <reaction evidence="2">
        <text>carbamoyl phosphate + L-ornithine = L-citrulline + phosphate + H(+)</text>
        <dbReference type="Rhea" id="RHEA:19513"/>
        <dbReference type="ChEBI" id="CHEBI:15378"/>
        <dbReference type="ChEBI" id="CHEBI:43474"/>
        <dbReference type="ChEBI" id="CHEBI:46911"/>
        <dbReference type="ChEBI" id="CHEBI:57743"/>
        <dbReference type="ChEBI" id="CHEBI:58228"/>
        <dbReference type="EC" id="2.1.3.3"/>
    </reaction>
</comment>
<comment type="pathway">
    <text evidence="2">Amino-acid biosynthesis; L-arginine biosynthesis; L-arginine from L-ornithine and carbamoyl phosphate: step 1/3.</text>
</comment>
<comment type="subcellular location">
    <subcellularLocation>
        <location evidence="2">Cytoplasm</location>
    </subcellularLocation>
</comment>
<comment type="similarity">
    <text evidence="2">Belongs to the aspartate/ornithine carbamoyltransferase superfamily. OTCase family.</text>
</comment>
<dbReference type="EC" id="2.1.3.3" evidence="2"/>
<dbReference type="EMBL" id="BX640421">
    <property type="protein sequence ID" value="CAE43797.1"/>
    <property type="molecule type" value="Genomic_DNA"/>
</dbReference>
<dbReference type="RefSeq" id="NP_882053.1">
    <property type="nucleotide sequence ID" value="NC_002929.2"/>
</dbReference>
<dbReference type="RefSeq" id="WP_003812938.1">
    <property type="nucleotide sequence ID" value="NZ_CP039022.1"/>
</dbReference>
<dbReference type="SMR" id="Q7VTJ8"/>
<dbReference type="STRING" id="257313.BP3538"/>
<dbReference type="PaxDb" id="257313-BP3538"/>
<dbReference type="GeneID" id="93204329"/>
<dbReference type="KEGG" id="bpe:BP3538"/>
<dbReference type="PATRIC" id="fig|257313.5.peg.3830"/>
<dbReference type="eggNOG" id="COG0078">
    <property type="taxonomic scope" value="Bacteria"/>
</dbReference>
<dbReference type="HOGENOM" id="CLU_043846_3_2_4"/>
<dbReference type="UniPathway" id="UPA00068">
    <property type="reaction ID" value="UER00112"/>
</dbReference>
<dbReference type="Proteomes" id="UP000002676">
    <property type="component" value="Chromosome"/>
</dbReference>
<dbReference type="GO" id="GO:0005737">
    <property type="term" value="C:cytoplasm"/>
    <property type="evidence" value="ECO:0007669"/>
    <property type="project" value="UniProtKB-SubCell"/>
</dbReference>
<dbReference type="GO" id="GO:0016597">
    <property type="term" value="F:amino acid binding"/>
    <property type="evidence" value="ECO:0007669"/>
    <property type="project" value="InterPro"/>
</dbReference>
<dbReference type="GO" id="GO:0004585">
    <property type="term" value="F:ornithine carbamoyltransferase activity"/>
    <property type="evidence" value="ECO:0007669"/>
    <property type="project" value="UniProtKB-UniRule"/>
</dbReference>
<dbReference type="GO" id="GO:0042450">
    <property type="term" value="P:arginine biosynthetic process via ornithine"/>
    <property type="evidence" value="ECO:0007669"/>
    <property type="project" value="TreeGrafter"/>
</dbReference>
<dbReference type="GO" id="GO:0019240">
    <property type="term" value="P:citrulline biosynthetic process"/>
    <property type="evidence" value="ECO:0007669"/>
    <property type="project" value="TreeGrafter"/>
</dbReference>
<dbReference type="GO" id="GO:0006526">
    <property type="term" value="P:L-arginine biosynthetic process"/>
    <property type="evidence" value="ECO:0007669"/>
    <property type="project" value="UniProtKB-UniRule"/>
</dbReference>
<dbReference type="FunFam" id="3.40.50.1370:FF:000008">
    <property type="entry name" value="Ornithine carbamoyltransferase"/>
    <property type="match status" value="1"/>
</dbReference>
<dbReference type="Gene3D" id="3.40.50.1370">
    <property type="entry name" value="Aspartate/ornithine carbamoyltransferase"/>
    <property type="match status" value="2"/>
</dbReference>
<dbReference type="HAMAP" id="MF_01109">
    <property type="entry name" value="OTCase"/>
    <property type="match status" value="1"/>
</dbReference>
<dbReference type="InterPro" id="IPR006132">
    <property type="entry name" value="Asp/Orn_carbamoyltranf_P-bd"/>
</dbReference>
<dbReference type="InterPro" id="IPR006130">
    <property type="entry name" value="Asp/Orn_carbamoylTrfase"/>
</dbReference>
<dbReference type="InterPro" id="IPR036901">
    <property type="entry name" value="Asp/Orn_carbamoylTrfase_sf"/>
</dbReference>
<dbReference type="InterPro" id="IPR006131">
    <property type="entry name" value="Asp_carbamoyltransf_Asp/Orn-bd"/>
</dbReference>
<dbReference type="InterPro" id="IPR002292">
    <property type="entry name" value="Orn/put_carbamltrans"/>
</dbReference>
<dbReference type="InterPro" id="IPR024904">
    <property type="entry name" value="OTCase_ArgI"/>
</dbReference>
<dbReference type="NCBIfam" id="TIGR00658">
    <property type="entry name" value="orni_carb_tr"/>
    <property type="match status" value="1"/>
</dbReference>
<dbReference type="NCBIfam" id="NF001986">
    <property type="entry name" value="PRK00779.1"/>
    <property type="match status" value="1"/>
</dbReference>
<dbReference type="PANTHER" id="PTHR45753">
    <property type="entry name" value="ORNITHINE CARBAMOYLTRANSFERASE, MITOCHONDRIAL"/>
    <property type="match status" value="1"/>
</dbReference>
<dbReference type="PANTHER" id="PTHR45753:SF3">
    <property type="entry name" value="ORNITHINE TRANSCARBAMYLASE, MITOCHONDRIAL"/>
    <property type="match status" value="1"/>
</dbReference>
<dbReference type="Pfam" id="PF00185">
    <property type="entry name" value="OTCace"/>
    <property type="match status" value="1"/>
</dbReference>
<dbReference type="Pfam" id="PF02729">
    <property type="entry name" value="OTCace_N"/>
    <property type="match status" value="1"/>
</dbReference>
<dbReference type="PRINTS" id="PR00100">
    <property type="entry name" value="AOTCASE"/>
</dbReference>
<dbReference type="PRINTS" id="PR00102">
    <property type="entry name" value="OTCASE"/>
</dbReference>
<dbReference type="SUPFAM" id="SSF53671">
    <property type="entry name" value="Aspartate/ornithine carbamoyltransferase"/>
    <property type="match status" value="1"/>
</dbReference>
<dbReference type="PROSITE" id="PS00097">
    <property type="entry name" value="CARBAMOYLTRANSFERASE"/>
    <property type="match status" value="1"/>
</dbReference>
<name>OTC_BORPE</name>
<organism>
    <name type="scientific">Bordetella pertussis (strain Tohama I / ATCC BAA-589 / NCTC 13251)</name>
    <dbReference type="NCBI Taxonomy" id="257313"/>
    <lineage>
        <taxon>Bacteria</taxon>
        <taxon>Pseudomonadati</taxon>
        <taxon>Pseudomonadota</taxon>
        <taxon>Betaproteobacteria</taxon>
        <taxon>Burkholderiales</taxon>
        <taxon>Alcaligenaceae</taxon>
        <taxon>Bordetella</taxon>
    </lineage>
</organism>
<accession>Q7VTJ8</accession>